<sequence length="400" mass="46392">MDKSLFEQARPILEQIQDNGFEAYYVGGSVRDYVMGRNIHDIDITTSATPDEIESIFSHTIPVGKEHGTINVVFNDENYEVTTFRAEEDYVDHRRPSGVTFVRDLYEDLQRRDFTMNAIAMDTANKLYDYFDGQQDINNRIIRTVGIAEERFQEDALRMIRCLRFQSQLSFDIATETFEAMRTQMADIKFLSIERIVIELTKLMRGINVEKSFNHLKSLKAFNYMPYFEHLDMNQINVTEPIDLELLIAIVSVKFDINYSLKPLKLSNRQVKDINQYIQIMNALPSIITKEQLKMFVYDYDTNLIKNVMVAADVLKANDIQGHEPLIVNLQTIDETLHRLPMHNRKDMMVNGGVLMAHLNAKSGPWLKDLLRQIEIAIVTGKVSNEETEILKWVDNHVKI</sequence>
<dbReference type="EC" id="2.7.7.72" evidence="1"/>
<dbReference type="EMBL" id="BX571856">
    <property type="protein sequence ID" value="CAG40466.1"/>
    <property type="molecule type" value="Genomic_DNA"/>
</dbReference>
<dbReference type="RefSeq" id="WP_000361536.1">
    <property type="nucleotide sequence ID" value="NC_002952.2"/>
</dbReference>
<dbReference type="SMR" id="Q6GGV2"/>
<dbReference type="KEGG" id="sar:SAR1468"/>
<dbReference type="HOGENOM" id="CLU_015961_3_0_9"/>
<dbReference type="Proteomes" id="UP000000596">
    <property type="component" value="Chromosome"/>
</dbReference>
<dbReference type="GO" id="GO:0005524">
    <property type="term" value="F:ATP binding"/>
    <property type="evidence" value="ECO:0007669"/>
    <property type="project" value="UniProtKB-UniRule"/>
</dbReference>
<dbReference type="GO" id="GO:0004810">
    <property type="term" value="F:CCA tRNA nucleotidyltransferase activity"/>
    <property type="evidence" value="ECO:0007669"/>
    <property type="project" value="UniProtKB-UniRule"/>
</dbReference>
<dbReference type="GO" id="GO:0000287">
    <property type="term" value="F:magnesium ion binding"/>
    <property type="evidence" value="ECO:0007669"/>
    <property type="project" value="UniProtKB-UniRule"/>
</dbReference>
<dbReference type="GO" id="GO:0000049">
    <property type="term" value="F:tRNA binding"/>
    <property type="evidence" value="ECO:0007669"/>
    <property type="project" value="UniProtKB-UniRule"/>
</dbReference>
<dbReference type="GO" id="GO:0042245">
    <property type="term" value="P:RNA repair"/>
    <property type="evidence" value="ECO:0007669"/>
    <property type="project" value="UniProtKB-KW"/>
</dbReference>
<dbReference type="GO" id="GO:0001680">
    <property type="term" value="P:tRNA 3'-terminal CCA addition"/>
    <property type="evidence" value="ECO:0007669"/>
    <property type="project" value="UniProtKB-UniRule"/>
</dbReference>
<dbReference type="CDD" id="cd05398">
    <property type="entry name" value="NT_ClassII-CCAase"/>
    <property type="match status" value="1"/>
</dbReference>
<dbReference type="Gene3D" id="1.10.246.80">
    <property type="match status" value="1"/>
</dbReference>
<dbReference type="Gene3D" id="3.30.460.10">
    <property type="entry name" value="Beta Polymerase, domain 2"/>
    <property type="match status" value="1"/>
</dbReference>
<dbReference type="Gene3D" id="1.10.3090.10">
    <property type="entry name" value="cca-adding enzyme, domain 2"/>
    <property type="match status" value="1"/>
</dbReference>
<dbReference type="HAMAP" id="MF_01263">
    <property type="entry name" value="CCA_bact_type3"/>
    <property type="match status" value="1"/>
</dbReference>
<dbReference type="InterPro" id="IPR050264">
    <property type="entry name" value="Bact_CCA-adding_enz_type3_sf"/>
</dbReference>
<dbReference type="InterPro" id="IPR032810">
    <property type="entry name" value="CCA-adding_enz_C"/>
</dbReference>
<dbReference type="InterPro" id="IPR023068">
    <property type="entry name" value="CCA-adding_enz_firmicutes"/>
</dbReference>
<dbReference type="InterPro" id="IPR043519">
    <property type="entry name" value="NT_sf"/>
</dbReference>
<dbReference type="InterPro" id="IPR002646">
    <property type="entry name" value="PolA_pol_head_dom"/>
</dbReference>
<dbReference type="InterPro" id="IPR032828">
    <property type="entry name" value="PolyA_RNA-bd"/>
</dbReference>
<dbReference type="NCBIfam" id="NF009814">
    <property type="entry name" value="PRK13299.1"/>
    <property type="match status" value="1"/>
</dbReference>
<dbReference type="PANTHER" id="PTHR46173">
    <property type="entry name" value="CCA TRNA NUCLEOTIDYLTRANSFERASE 1, MITOCHONDRIAL"/>
    <property type="match status" value="1"/>
</dbReference>
<dbReference type="PANTHER" id="PTHR46173:SF1">
    <property type="entry name" value="CCA TRNA NUCLEOTIDYLTRANSFERASE 1, MITOCHONDRIAL"/>
    <property type="match status" value="1"/>
</dbReference>
<dbReference type="Pfam" id="PF01743">
    <property type="entry name" value="PolyA_pol"/>
    <property type="match status" value="1"/>
</dbReference>
<dbReference type="Pfam" id="PF12627">
    <property type="entry name" value="PolyA_pol_RNAbd"/>
    <property type="match status" value="1"/>
</dbReference>
<dbReference type="Pfam" id="PF13735">
    <property type="entry name" value="tRNA_NucTran2_2"/>
    <property type="match status" value="1"/>
</dbReference>
<dbReference type="SUPFAM" id="SSF81301">
    <property type="entry name" value="Nucleotidyltransferase"/>
    <property type="match status" value="1"/>
</dbReference>
<dbReference type="SUPFAM" id="SSF81891">
    <property type="entry name" value="Poly A polymerase C-terminal region-like"/>
    <property type="match status" value="1"/>
</dbReference>
<comment type="function">
    <text evidence="1">Catalyzes the addition and repair of the essential 3'-terminal CCA sequence in tRNAs without using a nucleic acid template. Adds these three nucleotides in the order of C, C, and A to the tRNA nucleotide-73, using CTP and ATP as substrates and producing inorganic pyrophosphate. tRNA 3'-terminal CCA addition is required both for tRNA processing and repair. Also involved in tRNA surveillance by mediating tandem CCA addition to generate a CCACCA at the 3' terminus of unstable tRNAs. While stable tRNAs receive only 3'-terminal CCA, unstable tRNAs are marked with CCACCA and rapidly degraded.</text>
</comment>
<comment type="catalytic activity">
    <reaction evidence="1">
        <text>a tRNA precursor + 2 CTP + ATP = a tRNA with a 3' CCA end + 3 diphosphate</text>
        <dbReference type="Rhea" id="RHEA:14433"/>
        <dbReference type="Rhea" id="RHEA-COMP:10465"/>
        <dbReference type="Rhea" id="RHEA-COMP:10468"/>
        <dbReference type="ChEBI" id="CHEBI:30616"/>
        <dbReference type="ChEBI" id="CHEBI:33019"/>
        <dbReference type="ChEBI" id="CHEBI:37563"/>
        <dbReference type="ChEBI" id="CHEBI:74896"/>
        <dbReference type="ChEBI" id="CHEBI:83071"/>
        <dbReference type="EC" id="2.7.7.72"/>
    </reaction>
</comment>
<comment type="catalytic activity">
    <reaction evidence="1">
        <text>a tRNA with a 3' CCA end + 2 CTP + ATP = a tRNA with a 3' CCACCA end + 3 diphosphate</text>
        <dbReference type="Rhea" id="RHEA:76235"/>
        <dbReference type="Rhea" id="RHEA-COMP:10468"/>
        <dbReference type="Rhea" id="RHEA-COMP:18655"/>
        <dbReference type="ChEBI" id="CHEBI:30616"/>
        <dbReference type="ChEBI" id="CHEBI:33019"/>
        <dbReference type="ChEBI" id="CHEBI:37563"/>
        <dbReference type="ChEBI" id="CHEBI:83071"/>
        <dbReference type="ChEBI" id="CHEBI:195187"/>
    </reaction>
    <physiologicalReaction direction="left-to-right" evidence="1">
        <dbReference type="Rhea" id="RHEA:76236"/>
    </physiologicalReaction>
</comment>
<comment type="cofactor">
    <cofactor evidence="1">
        <name>Mg(2+)</name>
        <dbReference type="ChEBI" id="CHEBI:18420"/>
    </cofactor>
</comment>
<comment type="subunit">
    <text evidence="1">Homodimer.</text>
</comment>
<comment type="miscellaneous">
    <text evidence="1">A single active site specifically recognizes both ATP and CTP and is responsible for their addition.</text>
</comment>
<comment type="similarity">
    <text evidence="1">Belongs to the tRNA nucleotidyltransferase/poly(A) polymerase family. Bacterial CCA-adding enzyme type 3 subfamily.</text>
</comment>
<gene>
    <name evidence="1" type="primary">cca</name>
    <name type="ordered locus">SAR1468</name>
</gene>
<name>CCA_STAAR</name>
<accession>Q6GGV2</accession>
<reference key="1">
    <citation type="journal article" date="2004" name="Proc. Natl. Acad. Sci. U.S.A.">
        <title>Complete genomes of two clinical Staphylococcus aureus strains: evidence for the rapid evolution of virulence and drug resistance.</title>
        <authorList>
            <person name="Holden M.T.G."/>
            <person name="Feil E.J."/>
            <person name="Lindsay J.A."/>
            <person name="Peacock S.J."/>
            <person name="Day N.P.J."/>
            <person name="Enright M.C."/>
            <person name="Foster T.J."/>
            <person name="Moore C.E."/>
            <person name="Hurst L."/>
            <person name="Atkin R."/>
            <person name="Barron A."/>
            <person name="Bason N."/>
            <person name="Bentley S.D."/>
            <person name="Chillingworth C."/>
            <person name="Chillingworth T."/>
            <person name="Churcher C."/>
            <person name="Clark L."/>
            <person name="Corton C."/>
            <person name="Cronin A."/>
            <person name="Doggett J."/>
            <person name="Dowd L."/>
            <person name="Feltwell T."/>
            <person name="Hance Z."/>
            <person name="Harris B."/>
            <person name="Hauser H."/>
            <person name="Holroyd S."/>
            <person name="Jagels K."/>
            <person name="James K.D."/>
            <person name="Lennard N."/>
            <person name="Line A."/>
            <person name="Mayes R."/>
            <person name="Moule S."/>
            <person name="Mungall K."/>
            <person name="Ormond D."/>
            <person name="Quail M.A."/>
            <person name="Rabbinowitsch E."/>
            <person name="Rutherford K.M."/>
            <person name="Sanders M."/>
            <person name="Sharp S."/>
            <person name="Simmonds M."/>
            <person name="Stevens K."/>
            <person name="Whitehead S."/>
            <person name="Barrell B.G."/>
            <person name="Spratt B.G."/>
            <person name="Parkhill J."/>
        </authorList>
    </citation>
    <scope>NUCLEOTIDE SEQUENCE [LARGE SCALE GENOMIC DNA]</scope>
    <source>
        <strain>MRSA252</strain>
    </source>
</reference>
<protein>
    <recommendedName>
        <fullName evidence="1">CCA-adding enzyme</fullName>
        <ecNumber evidence="1">2.7.7.72</ecNumber>
    </recommendedName>
    <alternativeName>
        <fullName evidence="1">CCA tRNA nucleotidyltransferase</fullName>
    </alternativeName>
    <alternativeName>
        <fullName evidence="1">tRNA CCA-pyrophosphorylase</fullName>
    </alternativeName>
    <alternativeName>
        <fullName evidence="1">tRNA adenylyl-/cytidylyl- transferase</fullName>
    </alternativeName>
    <alternativeName>
        <fullName evidence="1">tRNA nucleotidyltransferase</fullName>
    </alternativeName>
    <alternativeName>
        <fullName evidence="1">tRNA-NT</fullName>
    </alternativeName>
</protein>
<evidence type="ECO:0000255" key="1">
    <source>
        <dbReference type="HAMAP-Rule" id="MF_01263"/>
    </source>
</evidence>
<keyword id="KW-0067">ATP-binding</keyword>
<keyword id="KW-0460">Magnesium</keyword>
<keyword id="KW-0479">Metal-binding</keyword>
<keyword id="KW-0547">Nucleotide-binding</keyword>
<keyword id="KW-0548">Nucleotidyltransferase</keyword>
<keyword id="KW-0692">RNA repair</keyword>
<keyword id="KW-0694">RNA-binding</keyword>
<keyword id="KW-0808">Transferase</keyword>
<keyword id="KW-0819">tRNA processing</keyword>
<feature type="chain" id="PRO_0000139048" description="CCA-adding enzyme">
    <location>
        <begin position="1"/>
        <end position="400"/>
    </location>
</feature>
<feature type="binding site" evidence="1">
    <location>
        <position position="28"/>
    </location>
    <ligand>
        <name>ATP</name>
        <dbReference type="ChEBI" id="CHEBI:30616"/>
    </ligand>
</feature>
<feature type="binding site" evidence="1">
    <location>
        <position position="28"/>
    </location>
    <ligand>
        <name>CTP</name>
        <dbReference type="ChEBI" id="CHEBI:37563"/>
    </ligand>
</feature>
<feature type="binding site" evidence="1">
    <location>
        <position position="31"/>
    </location>
    <ligand>
        <name>ATP</name>
        <dbReference type="ChEBI" id="CHEBI:30616"/>
    </ligand>
</feature>
<feature type="binding site" evidence="1">
    <location>
        <position position="31"/>
    </location>
    <ligand>
        <name>CTP</name>
        <dbReference type="ChEBI" id="CHEBI:37563"/>
    </ligand>
</feature>
<feature type="binding site" evidence="1">
    <location>
        <position position="41"/>
    </location>
    <ligand>
        <name>Mg(2+)</name>
        <dbReference type="ChEBI" id="CHEBI:18420"/>
    </ligand>
</feature>
<feature type="binding site" evidence="1">
    <location>
        <position position="43"/>
    </location>
    <ligand>
        <name>Mg(2+)</name>
        <dbReference type="ChEBI" id="CHEBI:18420"/>
    </ligand>
</feature>
<feature type="binding site" evidence="1">
    <location>
        <position position="112"/>
    </location>
    <ligand>
        <name>ATP</name>
        <dbReference type="ChEBI" id="CHEBI:30616"/>
    </ligand>
</feature>
<feature type="binding site" evidence="1">
    <location>
        <position position="112"/>
    </location>
    <ligand>
        <name>CTP</name>
        <dbReference type="ChEBI" id="CHEBI:37563"/>
    </ligand>
</feature>
<feature type="binding site" evidence="1">
    <location>
        <position position="155"/>
    </location>
    <ligand>
        <name>ATP</name>
        <dbReference type="ChEBI" id="CHEBI:30616"/>
    </ligand>
</feature>
<feature type="binding site" evidence="1">
    <location>
        <position position="155"/>
    </location>
    <ligand>
        <name>CTP</name>
        <dbReference type="ChEBI" id="CHEBI:37563"/>
    </ligand>
</feature>
<feature type="binding site" evidence="1">
    <location>
        <position position="158"/>
    </location>
    <ligand>
        <name>ATP</name>
        <dbReference type="ChEBI" id="CHEBI:30616"/>
    </ligand>
</feature>
<feature type="binding site" evidence="1">
    <location>
        <position position="158"/>
    </location>
    <ligand>
        <name>CTP</name>
        <dbReference type="ChEBI" id="CHEBI:37563"/>
    </ligand>
</feature>
<feature type="binding site" evidence="1">
    <location>
        <position position="161"/>
    </location>
    <ligand>
        <name>ATP</name>
        <dbReference type="ChEBI" id="CHEBI:30616"/>
    </ligand>
</feature>
<feature type="binding site" evidence="1">
    <location>
        <position position="161"/>
    </location>
    <ligand>
        <name>CTP</name>
        <dbReference type="ChEBI" id="CHEBI:37563"/>
    </ligand>
</feature>
<feature type="binding site" evidence="1">
    <location>
        <position position="164"/>
    </location>
    <ligand>
        <name>ATP</name>
        <dbReference type="ChEBI" id="CHEBI:30616"/>
    </ligand>
</feature>
<feature type="binding site" evidence="1">
    <location>
        <position position="164"/>
    </location>
    <ligand>
        <name>CTP</name>
        <dbReference type="ChEBI" id="CHEBI:37563"/>
    </ligand>
</feature>
<proteinExistence type="inferred from homology"/>
<organism>
    <name type="scientific">Staphylococcus aureus (strain MRSA252)</name>
    <dbReference type="NCBI Taxonomy" id="282458"/>
    <lineage>
        <taxon>Bacteria</taxon>
        <taxon>Bacillati</taxon>
        <taxon>Bacillota</taxon>
        <taxon>Bacilli</taxon>
        <taxon>Bacillales</taxon>
        <taxon>Staphylococcaceae</taxon>
        <taxon>Staphylococcus</taxon>
    </lineage>
</organism>